<organism>
    <name type="scientific">Caenorhabditis elegans</name>
    <dbReference type="NCBI Taxonomy" id="6239"/>
    <lineage>
        <taxon>Eukaryota</taxon>
        <taxon>Metazoa</taxon>
        <taxon>Ecdysozoa</taxon>
        <taxon>Nematoda</taxon>
        <taxon>Chromadorea</taxon>
        <taxon>Rhabditida</taxon>
        <taxon>Rhabditina</taxon>
        <taxon>Rhabditomorpha</taxon>
        <taxon>Rhabditoidea</taxon>
        <taxon>Rhabditidae</taxon>
        <taxon>Peloderinae</taxon>
        <taxon>Caenorhabditis</taxon>
    </lineage>
</organism>
<name>SELT1_CAEEL</name>
<dbReference type="EC" id="1.8.1.9" evidence="3"/>
<dbReference type="EMBL" id="Z78417">
    <property type="protein sequence ID" value="CAB01692.2"/>
    <property type="molecule type" value="Genomic_DNA"/>
</dbReference>
<dbReference type="EMBL" id="Z78417">
    <property type="protein sequence ID" value="CAB01684.2"/>
    <property type="molecule type" value="Genomic_DNA"/>
</dbReference>
<dbReference type="PIR" id="T19747">
    <property type="entry name" value="T19747"/>
</dbReference>
<dbReference type="PIR" id="T19755">
    <property type="entry name" value="T19755"/>
</dbReference>
<dbReference type="RefSeq" id="NP_509929.2">
    <molecule id="Q9U3N5-1"/>
    <property type="nucleotide sequence ID" value="NM_077528.4"/>
</dbReference>
<dbReference type="RefSeq" id="NP_509930.2">
    <molecule id="Q9U3N5-2"/>
    <property type="nucleotide sequence ID" value="NM_077529.5"/>
</dbReference>
<dbReference type="BioGRID" id="46251">
    <property type="interactions" value="19"/>
</dbReference>
<dbReference type="FunCoup" id="Q9U3N5">
    <property type="interactions" value="2782"/>
</dbReference>
<dbReference type="STRING" id="6239.C35C5.3b.1"/>
<dbReference type="PaxDb" id="6239-C35C5.3b"/>
<dbReference type="PeptideAtlas" id="Q9U3N5"/>
<dbReference type="EnsemblMetazoa" id="C35C5.3a.1">
    <molecule id="Q9U3N5-2"/>
    <property type="protein sequence ID" value="C35C5.3a.1"/>
    <property type="gene ID" value="WBGene00007955"/>
</dbReference>
<dbReference type="EnsemblMetazoa" id="C35C5.3b.1">
    <molecule id="Q9U3N5-1"/>
    <property type="protein sequence ID" value="C35C5.3b.1"/>
    <property type="gene ID" value="WBGene00007955"/>
</dbReference>
<dbReference type="GeneID" id="181343"/>
<dbReference type="KEGG" id="cel:CELE_C35C5.3"/>
<dbReference type="UCSC" id="C35C5.3b">
    <molecule id="Q9U3N5-1"/>
    <property type="organism name" value="c. elegans"/>
</dbReference>
<dbReference type="AGR" id="WB:WBGene00007955"/>
<dbReference type="CTD" id="181343"/>
<dbReference type="WormBase" id="C35C5.3a">
    <molecule id="Q9U3N5-2"/>
    <property type="protein sequence ID" value="CE43224"/>
    <property type="gene ID" value="WBGene00007955"/>
    <property type="gene designation" value="selt-1.1"/>
</dbReference>
<dbReference type="WormBase" id="C35C5.3b">
    <molecule id="Q9U3N5-1"/>
    <property type="protein sequence ID" value="CE43266"/>
    <property type="gene ID" value="WBGene00007955"/>
    <property type="gene designation" value="selt-1.1"/>
</dbReference>
<dbReference type="eggNOG" id="KOG3286">
    <property type="taxonomic scope" value="Eukaryota"/>
</dbReference>
<dbReference type="GeneTree" id="ENSGT00390000011725"/>
<dbReference type="HOGENOM" id="CLU_1278648_0_0_1"/>
<dbReference type="InParanoid" id="Q9U3N5"/>
<dbReference type="OMA" id="HIEVREQ"/>
<dbReference type="OrthoDB" id="60822at2759"/>
<dbReference type="PhylomeDB" id="Q9U3N5"/>
<dbReference type="PRO" id="PR:Q9U3N5"/>
<dbReference type="Proteomes" id="UP000001940">
    <property type="component" value="Chromosome X"/>
</dbReference>
<dbReference type="Bgee" id="WBGene00007955">
    <property type="expression patterns" value="Expressed in pharyngeal muscle cell (C elegans) and 4 other cell types or tissues"/>
</dbReference>
<dbReference type="GO" id="GO:0005789">
    <property type="term" value="C:endoplasmic reticulum membrane"/>
    <property type="evidence" value="ECO:0000318"/>
    <property type="project" value="GO_Central"/>
</dbReference>
<dbReference type="GO" id="GO:0004791">
    <property type="term" value="F:thioredoxin-disulfide reductase (NADPH) activity"/>
    <property type="evidence" value="ECO:0000318"/>
    <property type="project" value="GO_Central"/>
</dbReference>
<dbReference type="GO" id="GO:0045454">
    <property type="term" value="P:cell redox homeostasis"/>
    <property type="evidence" value="ECO:0000318"/>
    <property type="project" value="GO_Central"/>
</dbReference>
<dbReference type="Gene3D" id="3.40.30.10">
    <property type="entry name" value="Glutaredoxin"/>
    <property type="match status" value="1"/>
</dbReference>
<dbReference type="InterPro" id="IPR011893">
    <property type="entry name" value="Selenoprotein_Rdx-typ"/>
</dbReference>
<dbReference type="InterPro" id="IPR019389">
    <property type="entry name" value="Selenoprotein_T"/>
</dbReference>
<dbReference type="InterPro" id="IPR036249">
    <property type="entry name" value="Thioredoxin-like_sf"/>
</dbReference>
<dbReference type="NCBIfam" id="TIGR02174">
    <property type="entry name" value="CXXU_selWTH"/>
    <property type="match status" value="1"/>
</dbReference>
<dbReference type="PANTHER" id="PTHR13544">
    <property type="entry name" value="SELENOPROTEIN T"/>
    <property type="match status" value="1"/>
</dbReference>
<dbReference type="PANTHER" id="PTHR13544:SF0">
    <property type="entry name" value="THIOREDOXIN REDUCTASE-LIKE SELENOPROTEIN T"/>
    <property type="match status" value="1"/>
</dbReference>
<dbReference type="Pfam" id="PF10262">
    <property type="entry name" value="Rdx"/>
    <property type="match status" value="1"/>
</dbReference>
<dbReference type="SUPFAM" id="SSF52833">
    <property type="entry name" value="Thioredoxin-like"/>
    <property type="match status" value="1"/>
</dbReference>
<keyword id="KW-0025">Alternative splicing</keyword>
<keyword id="KW-1015">Disulfide bond</keyword>
<keyword id="KW-0256">Endoplasmic reticulum</keyword>
<keyword id="KW-0521">NADP</keyword>
<keyword id="KW-0560">Oxidoreductase</keyword>
<keyword id="KW-0676">Redox-active center</keyword>
<keyword id="KW-1185">Reference proteome</keyword>
<keyword id="KW-0732">Signal</keyword>
<accession>Q9U3N5</accession>
<accession>Q93327</accession>
<feature type="signal peptide" evidence="1">
    <location>
        <begin position="1"/>
        <end position="26"/>
    </location>
</feature>
<feature type="chain" id="PRO_0000032293" description="Thioredoxin reductase-like selenoprotein T homolog selt-1.1" evidence="3">
    <location>
        <begin position="27"/>
        <end position="247"/>
    </location>
</feature>
<feature type="disulfide bond" description="Redox-active" evidence="3">
    <location>
        <begin position="92"/>
        <end position="95"/>
    </location>
</feature>
<feature type="splice variant" id="VSP_006041" description="In isoform a." evidence="3">
    <location>
        <begin position="24"/>
        <end position="26"/>
    </location>
</feature>
<protein>
    <recommendedName>
        <fullName evidence="3">Thioredoxin reductase-like selenoprotein T homolog selt-1.1</fullName>
        <ecNumber evidence="3">1.8.1.9</ecNumber>
    </recommendedName>
</protein>
<gene>
    <name evidence="5" type="primary">selt-1.1</name>
    <name evidence="5" type="ORF">C35C5.3</name>
</gene>
<comment type="function">
    <text evidence="2 3">Probably has thioredoxin reductase-like oxidoreductase activity. Plays a role in regulating the oxidative stress response, and odorant and pathogenic bacteria avoidance behavior (PubMed:28347729).</text>
</comment>
<comment type="catalytic activity">
    <reaction evidence="3">
        <text>[thioredoxin]-dithiol + NADP(+) = [thioredoxin]-disulfide + NADPH + H(+)</text>
        <dbReference type="Rhea" id="RHEA:20345"/>
        <dbReference type="Rhea" id="RHEA-COMP:10698"/>
        <dbReference type="Rhea" id="RHEA-COMP:10700"/>
        <dbReference type="ChEBI" id="CHEBI:15378"/>
        <dbReference type="ChEBI" id="CHEBI:29950"/>
        <dbReference type="ChEBI" id="CHEBI:50058"/>
        <dbReference type="ChEBI" id="CHEBI:57783"/>
        <dbReference type="ChEBI" id="CHEBI:58349"/>
        <dbReference type="EC" id="1.8.1.9"/>
    </reaction>
</comment>
<comment type="subcellular location">
    <subcellularLocation>
        <location evidence="2">Endoplasmic reticulum</location>
    </subcellularLocation>
</comment>
<comment type="alternative products">
    <event type="alternative splicing"/>
    <isoform>
        <id>Q9U3N5-1</id>
        <name evidence="5">b</name>
        <sequence type="displayed"/>
    </isoform>
    <isoform>
        <id>Q9U3N5-2</id>
        <name evidence="4">a</name>
        <sequence type="described" ref="VSP_006041"/>
    </isoform>
</comment>
<comment type="tissue specificity">
    <text evidence="2">Broadly expressed in neurons of nervous system including ADL, ASH, ASI, ASJ, ASK and AWB amphid sensilla neurons, in epithelial cells including hypodermal, arcade, pharyngeal, vulval and rectal cells, and in somatic muscle cells of the head, neck and body wall, and non-striated pharyngeal muscles.</text>
</comment>
<comment type="developmental stage">
    <text evidence="2">Expressed throughout development from the pre-bean embryonic stages to the adult stage.</text>
</comment>
<comment type="disruption phenotype">
    <text evidence="2">Viable with normal development, anatomy, motility, lifespan and brood size. Increased sensitivity to oxidative stress induced by rotenone and impaired avoidance behavior in response to the odorants 2-nonanone and 1-octanol and the pathogenic bacterium S.marcescens. Double knockouts with selt-1.2 are also viable with no visible phenotype.</text>
</comment>
<comment type="similarity">
    <text evidence="3">Belongs to the SelWTH family. SELT subfamily.</text>
</comment>
<sequence>MSRFGVFIIGVLFFMSVCDVLRTVSAEEHSHDENHVHEKDDFEAEFGDETDSQSFSQGTEEDHIEVREQSSFVKPTAVHHAKDLPTLRIFYCVSCGYKQAFDQFTTFAKEKYPNMPIEGANFAPVLWKAYVAQALSFVKMAVLVLVLGGINPFERFGLGYPQILQHAHGNKMSSCMLVFMLGNLVEQSLISTGAFEVYLGNEQIWSKIESGRVPSPQEFMQLIDAQLAVLGKAPVNTESFGEFQQTV</sequence>
<evidence type="ECO:0000255" key="1"/>
<evidence type="ECO:0000269" key="2">
    <source>
    </source>
</evidence>
<evidence type="ECO:0000305" key="3"/>
<evidence type="ECO:0000312" key="4">
    <source>
        <dbReference type="WormBase" id="C35C5.3a"/>
    </source>
</evidence>
<evidence type="ECO:0000312" key="5">
    <source>
        <dbReference type="WormBase" id="C35C5.3b"/>
    </source>
</evidence>
<proteinExistence type="evidence at transcript level"/>
<reference key="1">
    <citation type="journal article" date="1998" name="Science">
        <title>Genome sequence of the nematode C. elegans: a platform for investigating biology.</title>
        <authorList>
            <consortium name="The C. elegans sequencing consortium"/>
        </authorList>
    </citation>
    <scope>NUCLEOTIDE SEQUENCE [LARGE SCALE GENOMIC DNA]</scope>
    <source>
        <strain>Bristol N2</strain>
    </source>
</reference>
<reference key="2">
    <citation type="journal article" date="2017" name="Free Radic. Biol. Med.">
        <title>Selenoprotein T is required for pathogenic bacteria avoidance in Caenorhabditis elegans.</title>
        <authorList>
            <person name="Romanelli-Cedrez L."/>
            <person name="Carrera I."/>
            <person name="Otero L."/>
            <person name="Miranda-Vizuete A."/>
            <person name="Mariotti M."/>
            <person name="Alkema M.J."/>
            <person name="Salinas G."/>
        </authorList>
    </citation>
    <scope>FUNCTION</scope>
    <scope>SUBCELLULAR LOCATION</scope>
    <scope>TISSUE SPECIFICITY</scope>
    <scope>DEVELOPMENTAL STAGE</scope>
    <scope>DISRUPTION PHENOTYPE</scope>
</reference>